<organism>
    <name type="scientific">Homo sapiens</name>
    <name type="common">Human</name>
    <dbReference type="NCBI Taxonomy" id="9606"/>
    <lineage>
        <taxon>Eukaryota</taxon>
        <taxon>Metazoa</taxon>
        <taxon>Chordata</taxon>
        <taxon>Craniata</taxon>
        <taxon>Vertebrata</taxon>
        <taxon>Euteleostomi</taxon>
        <taxon>Mammalia</taxon>
        <taxon>Eutheria</taxon>
        <taxon>Euarchontoglires</taxon>
        <taxon>Primates</taxon>
        <taxon>Haplorrhini</taxon>
        <taxon>Catarrhini</taxon>
        <taxon>Hominidae</taxon>
        <taxon>Homo</taxon>
    </lineage>
</organism>
<gene>
    <name type="primary">HERPUD2</name>
</gene>
<proteinExistence type="evidence at protein level"/>
<dbReference type="EMBL" id="AK055708">
    <property type="protein sequence ID" value="BAG51558.1"/>
    <property type="molecule type" value="mRNA"/>
</dbReference>
<dbReference type="EMBL" id="AK315685">
    <property type="protein sequence ID" value="BAG38050.1"/>
    <property type="molecule type" value="mRNA"/>
</dbReference>
<dbReference type="EMBL" id="AC018647">
    <property type="status" value="NOT_ANNOTATED_CDS"/>
    <property type="molecule type" value="Genomic_DNA"/>
</dbReference>
<dbReference type="EMBL" id="CH236951">
    <property type="protein sequence ID" value="EAL23973.1"/>
    <property type="molecule type" value="Genomic_DNA"/>
</dbReference>
<dbReference type="EMBL" id="CH471073">
    <property type="protein sequence ID" value="EAW94051.1"/>
    <property type="molecule type" value="Genomic_DNA"/>
</dbReference>
<dbReference type="EMBL" id="BC005091">
    <property type="protein sequence ID" value="AAH05091.1"/>
    <property type="molecule type" value="mRNA"/>
</dbReference>
<dbReference type="EMBL" id="BC020264">
    <property type="protein sequence ID" value="AAH20264.1"/>
    <property type="molecule type" value="mRNA"/>
</dbReference>
<dbReference type="EMBL" id="AK025966">
    <property type="protein sequence ID" value="BAB15300.1"/>
    <property type="molecule type" value="mRNA"/>
</dbReference>
<dbReference type="CCDS" id="CCDS5446.1"/>
<dbReference type="RefSeq" id="NP_071768.3">
    <property type="nucleotide sequence ID" value="NM_022373.4"/>
</dbReference>
<dbReference type="RefSeq" id="XP_016867995.1">
    <property type="nucleotide sequence ID" value="XM_017012506.3"/>
</dbReference>
<dbReference type="RefSeq" id="XP_054214760.1">
    <property type="nucleotide sequence ID" value="XM_054358785.1"/>
</dbReference>
<dbReference type="PDB" id="2KDB">
    <property type="method" value="NMR"/>
    <property type="chains" value="A=9-85"/>
</dbReference>
<dbReference type="PDBsum" id="2KDB"/>
<dbReference type="BMRB" id="Q9BSE4"/>
<dbReference type="SMR" id="Q9BSE4"/>
<dbReference type="BioGRID" id="122114">
    <property type="interactions" value="25"/>
</dbReference>
<dbReference type="FunCoup" id="Q9BSE4">
    <property type="interactions" value="3579"/>
</dbReference>
<dbReference type="IntAct" id="Q9BSE4">
    <property type="interactions" value="23"/>
</dbReference>
<dbReference type="STRING" id="9606.ENSP00000379390"/>
<dbReference type="iPTMnet" id="Q9BSE4"/>
<dbReference type="PhosphoSitePlus" id="Q9BSE4"/>
<dbReference type="BioMuta" id="HERPUD2"/>
<dbReference type="DMDM" id="296434524"/>
<dbReference type="jPOST" id="Q9BSE4"/>
<dbReference type="MassIVE" id="Q9BSE4"/>
<dbReference type="PaxDb" id="9606-ENSP00000379390"/>
<dbReference type="PeptideAtlas" id="Q9BSE4"/>
<dbReference type="ProteomicsDB" id="78881"/>
<dbReference type="Pumba" id="Q9BSE4"/>
<dbReference type="Antibodypedia" id="2395">
    <property type="antibodies" value="105 antibodies from 22 providers"/>
</dbReference>
<dbReference type="DNASU" id="64224"/>
<dbReference type="Ensembl" id="ENST00000311350.8">
    <property type="protein sequence ID" value="ENSP00000310729.3"/>
    <property type="gene ID" value="ENSG00000122557.11"/>
</dbReference>
<dbReference type="Ensembl" id="ENST00000396081.5">
    <property type="protein sequence ID" value="ENSP00000379390.1"/>
    <property type="gene ID" value="ENSG00000122557.11"/>
</dbReference>
<dbReference type="GeneID" id="64224"/>
<dbReference type="KEGG" id="hsa:64224"/>
<dbReference type="MANE-Select" id="ENST00000311350.8">
    <property type="protein sequence ID" value="ENSP00000310729.3"/>
    <property type="RefSeq nucleotide sequence ID" value="NM_022373.5"/>
    <property type="RefSeq protein sequence ID" value="NP_071768.3"/>
</dbReference>
<dbReference type="UCSC" id="uc003tes.5">
    <property type="organism name" value="human"/>
</dbReference>
<dbReference type="AGR" id="HGNC:21915"/>
<dbReference type="CTD" id="64224"/>
<dbReference type="DisGeNET" id="64224"/>
<dbReference type="GeneCards" id="HERPUD2"/>
<dbReference type="HGNC" id="HGNC:21915">
    <property type="gene designation" value="HERPUD2"/>
</dbReference>
<dbReference type="HPA" id="ENSG00000122557">
    <property type="expression patterns" value="Low tissue specificity"/>
</dbReference>
<dbReference type="MIM" id="620829">
    <property type="type" value="gene"/>
</dbReference>
<dbReference type="neXtProt" id="NX_Q9BSE4"/>
<dbReference type="OpenTargets" id="ENSG00000122557"/>
<dbReference type="PharmGKB" id="PA144596425"/>
<dbReference type="VEuPathDB" id="HostDB:ENSG00000122557"/>
<dbReference type="eggNOG" id="KOG4583">
    <property type="taxonomic scope" value="Eukaryota"/>
</dbReference>
<dbReference type="GeneTree" id="ENSGT00390000017671"/>
<dbReference type="HOGENOM" id="CLU_058243_0_0_1"/>
<dbReference type="InParanoid" id="Q9BSE4"/>
<dbReference type="OMA" id="YMQLMAA"/>
<dbReference type="OrthoDB" id="21589at2759"/>
<dbReference type="PAN-GO" id="Q9BSE4">
    <property type="GO annotations" value="1 GO annotation based on evolutionary models"/>
</dbReference>
<dbReference type="PhylomeDB" id="Q9BSE4"/>
<dbReference type="TreeFam" id="TF324319"/>
<dbReference type="PathwayCommons" id="Q9BSE4"/>
<dbReference type="SignaLink" id="Q9BSE4"/>
<dbReference type="BioGRID-ORCS" id="64224">
    <property type="hits" value="19 hits in 1149 CRISPR screens"/>
</dbReference>
<dbReference type="ChiTaRS" id="HERPUD2">
    <property type="organism name" value="human"/>
</dbReference>
<dbReference type="EvolutionaryTrace" id="Q9BSE4"/>
<dbReference type="GenomeRNAi" id="64224"/>
<dbReference type="Pharos" id="Q9BSE4">
    <property type="development level" value="Tdark"/>
</dbReference>
<dbReference type="PRO" id="PR:Q9BSE4"/>
<dbReference type="Proteomes" id="UP000005640">
    <property type="component" value="Chromosome 7"/>
</dbReference>
<dbReference type="RNAct" id="Q9BSE4">
    <property type="molecule type" value="protein"/>
</dbReference>
<dbReference type="Bgee" id="ENSG00000122557">
    <property type="expression patterns" value="Expressed in cauda epididymis and 198 other cell types or tissues"/>
</dbReference>
<dbReference type="ExpressionAtlas" id="Q9BSE4">
    <property type="expression patterns" value="baseline and differential"/>
</dbReference>
<dbReference type="GO" id="GO:0016020">
    <property type="term" value="C:membrane"/>
    <property type="evidence" value="ECO:0007669"/>
    <property type="project" value="UniProtKB-SubCell"/>
</dbReference>
<dbReference type="GO" id="GO:0030968">
    <property type="term" value="P:endoplasmic reticulum unfolded protein response"/>
    <property type="evidence" value="ECO:0000318"/>
    <property type="project" value="GO_Central"/>
</dbReference>
<dbReference type="GO" id="GO:0007283">
    <property type="term" value="P:spermatogenesis"/>
    <property type="evidence" value="ECO:0007669"/>
    <property type="project" value="Ensembl"/>
</dbReference>
<dbReference type="CDD" id="cd17119">
    <property type="entry name" value="Ubl_HERP2"/>
    <property type="match status" value="1"/>
</dbReference>
<dbReference type="FunFam" id="3.10.20.90:FF:000046">
    <property type="entry name" value="Homocysteine-responsive endoplasmic reticulum-resident ubiquitin-like domain member 2 protein"/>
    <property type="match status" value="1"/>
</dbReference>
<dbReference type="Gene3D" id="3.10.20.90">
    <property type="entry name" value="Phosphatidylinositol 3-kinase Catalytic Subunit, Chain A, domain 1"/>
    <property type="match status" value="1"/>
</dbReference>
<dbReference type="InterPro" id="IPR039751">
    <property type="entry name" value="HERPUD1/2"/>
</dbReference>
<dbReference type="InterPro" id="IPR000626">
    <property type="entry name" value="Ubiquitin-like_dom"/>
</dbReference>
<dbReference type="InterPro" id="IPR029071">
    <property type="entry name" value="Ubiquitin-like_domsf"/>
</dbReference>
<dbReference type="PANTHER" id="PTHR12943:SF5">
    <property type="entry name" value="HOMOCYSTEINE-RESPONSIVE ENDOPLASMIC RETICULUM-RESIDENT UBIQUITIN-LIKE DOMAIN MEMBER 2 PROTEIN"/>
    <property type="match status" value="1"/>
</dbReference>
<dbReference type="PANTHER" id="PTHR12943">
    <property type="entry name" value="HOMOCYSTEINE-RESPONSIVE ENDOPLASMIC RETICULUM-RESIDENT UNIQUITIN-LIKE DOMAIN HERPUD PROTEIN FAMILY MEMBER"/>
    <property type="match status" value="1"/>
</dbReference>
<dbReference type="Pfam" id="PF00240">
    <property type="entry name" value="ubiquitin"/>
    <property type="match status" value="1"/>
</dbReference>
<dbReference type="SMART" id="SM00213">
    <property type="entry name" value="UBQ"/>
    <property type="match status" value="1"/>
</dbReference>
<dbReference type="SUPFAM" id="SSF54236">
    <property type="entry name" value="Ubiquitin-like"/>
    <property type="match status" value="1"/>
</dbReference>
<dbReference type="PROSITE" id="PS50053">
    <property type="entry name" value="UBIQUITIN_2"/>
    <property type="match status" value="1"/>
</dbReference>
<accession>Q9BSE4</accession>
<accession>A4D1Y8</accession>
<accession>Q9H6F9</accession>
<evidence type="ECO:0000250" key="1"/>
<evidence type="ECO:0000255" key="2"/>
<evidence type="ECO:0000255" key="3">
    <source>
        <dbReference type="PROSITE-ProRule" id="PRU00214"/>
    </source>
</evidence>
<evidence type="ECO:0000256" key="4">
    <source>
        <dbReference type="SAM" id="MobiDB-lite"/>
    </source>
</evidence>
<evidence type="ECO:0000269" key="5">
    <source>
    </source>
</evidence>
<evidence type="ECO:0000305" key="6"/>
<evidence type="ECO:0007829" key="7">
    <source>
        <dbReference type="PDB" id="2KDB"/>
    </source>
</evidence>
<reference key="1">
    <citation type="journal article" date="2004" name="Nat. Genet.">
        <title>Complete sequencing and characterization of 21,243 full-length human cDNAs.</title>
        <authorList>
            <person name="Ota T."/>
            <person name="Suzuki Y."/>
            <person name="Nishikawa T."/>
            <person name="Otsuki T."/>
            <person name="Sugiyama T."/>
            <person name="Irie R."/>
            <person name="Wakamatsu A."/>
            <person name="Hayashi K."/>
            <person name="Sato H."/>
            <person name="Nagai K."/>
            <person name="Kimura K."/>
            <person name="Makita H."/>
            <person name="Sekine M."/>
            <person name="Obayashi M."/>
            <person name="Nishi T."/>
            <person name="Shibahara T."/>
            <person name="Tanaka T."/>
            <person name="Ishii S."/>
            <person name="Yamamoto J."/>
            <person name="Saito K."/>
            <person name="Kawai Y."/>
            <person name="Isono Y."/>
            <person name="Nakamura Y."/>
            <person name="Nagahari K."/>
            <person name="Murakami K."/>
            <person name="Yasuda T."/>
            <person name="Iwayanagi T."/>
            <person name="Wagatsuma M."/>
            <person name="Shiratori A."/>
            <person name="Sudo H."/>
            <person name="Hosoiri T."/>
            <person name="Kaku Y."/>
            <person name="Kodaira H."/>
            <person name="Kondo H."/>
            <person name="Sugawara M."/>
            <person name="Takahashi M."/>
            <person name="Kanda K."/>
            <person name="Yokoi T."/>
            <person name="Furuya T."/>
            <person name="Kikkawa E."/>
            <person name="Omura Y."/>
            <person name="Abe K."/>
            <person name="Kamihara K."/>
            <person name="Katsuta N."/>
            <person name="Sato K."/>
            <person name="Tanikawa M."/>
            <person name="Yamazaki M."/>
            <person name="Ninomiya K."/>
            <person name="Ishibashi T."/>
            <person name="Yamashita H."/>
            <person name="Murakawa K."/>
            <person name="Fujimori K."/>
            <person name="Tanai H."/>
            <person name="Kimata M."/>
            <person name="Watanabe M."/>
            <person name="Hiraoka S."/>
            <person name="Chiba Y."/>
            <person name="Ishida S."/>
            <person name="Ono Y."/>
            <person name="Takiguchi S."/>
            <person name="Watanabe S."/>
            <person name="Yosida M."/>
            <person name="Hotuta T."/>
            <person name="Kusano J."/>
            <person name="Kanehori K."/>
            <person name="Takahashi-Fujii A."/>
            <person name="Hara H."/>
            <person name="Tanase T.-O."/>
            <person name="Nomura Y."/>
            <person name="Togiya S."/>
            <person name="Komai F."/>
            <person name="Hara R."/>
            <person name="Takeuchi K."/>
            <person name="Arita M."/>
            <person name="Imose N."/>
            <person name="Musashino K."/>
            <person name="Yuuki H."/>
            <person name="Oshima A."/>
            <person name="Sasaki N."/>
            <person name="Aotsuka S."/>
            <person name="Yoshikawa Y."/>
            <person name="Matsunawa H."/>
            <person name="Ichihara T."/>
            <person name="Shiohata N."/>
            <person name="Sano S."/>
            <person name="Moriya S."/>
            <person name="Momiyama H."/>
            <person name="Satoh N."/>
            <person name="Takami S."/>
            <person name="Terashima Y."/>
            <person name="Suzuki O."/>
            <person name="Nakagawa S."/>
            <person name="Senoh A."/>
            <person name="Mizoguchi H."/>
            <person name="Goto Y."/>
            <person name="Shimizu F."/>
            <person name="Wakebe H."/>
            <person name="Hishigaki H."/>
            <person name="Watanabe T."/>
            <person name="Sugiyama A."/>
            <person name="Takemoto M."/>
            <person name="Kawakami B."/>
            <person name="Yamazaki M."/>
            <person name="Watanabe K."/>
            <person name="Kumagai A."/>
            <person name="Itakura S."/>
            <person name="Fukuzumi Y."/>
            <person name="Fujimori Y."/>
            <person name="Komiyama M."/>
            <person name="Tashiro H."/>
            <person name="Tanigami A."/>
            <person name="Fujiwara T."/>
            <person name="Ono T."/>
            <person name="Yamada K."/>
            <person name="Fujii Y."/>
            <person name="Ozaki K."/>
            <person name="Hirao M."/>
            <person name="Ohmori Y."/>
            <person name="Kawabata A."/>
            <person name="Hikiji T."/>
            <person name="Kobatake N."/>
            <person name="Inagaki H."/>
            <person name="Ikema Y."/>
            <person name="Okamoto S."/>
            <person name="Okitani R."/>
            <person name="Kawakami T."/>
            <person name="Noguchi S."/>
            <person name="Itoh T."/>
            <person name="Shigeta K."/>
            <person name="Senba T."/>
            <person name="Matsumura K."/>
            <person name="Nakajima Y."/>
            <person name="Mizuno T."/>
            <person name="Morinaga M."/>
            <person name="Sasaki M."/>
            <person name="Togashi T."/>
            <person name="Oyama M."/>
            <person name="Hata H."/>
            <person name="Watanabe M."/>
            <person name="Komatsu T."/>
            <person name="Mizushima-Sugano J."/>
            <person name="Satoh T."/>
            <person name="Shirai Y."/>
            <person name="Takahashi Y."/>
            <person name="Nakagawa K."/>
            <person name="Okumura K."/>
            <person name="Nagase T."/>
            <person name="Nomura N."/>
            <person name="Kikuchi H."/>
            <person name="Masuho Y."/>
            <person name="Yamashita R."/>
            <person name="Nakai K."/>
            <person name="Yada T."/>
            <person name="Nakamura Y."/>
            <person name="Ohara O."/>
            <person name="Isogai T."/>
            <person name="Sugano S."/>
        </authorList>
    </citation>
    <scope>NUCLEOTIDE SEQUENCE [LARGE SCALE MRNA]</scope>
    <source>
        <tissue>Kidney epithelium</tissue>
        <tissue>Testis</tissue>
    </source>
</reference>
<reference key="2">
    <citation type="journal article" date="2003" name="Nature">
        <title>The DNA sequence of human chromosome 7.</title>
        <authorList>
            <person name="Hillier L.W."/>
            <person name="Fulton R.S."/>
            <person name="Fulton L.A."/>
            <person name="Graves T.A."/>
            <person name="Pepin K.H."/>
            <person name="Wagner-McPherson C."/>
            <person name="Layman D."/>
            <person name="Maas J."/>
            <person name="Jaeger S."/>
            <person name="Walker R."/>
            <person name="Wylie K."/>
            <person name="Sekhon M."/>
            <person name="Becker M.C."/>
            <person name="O'Laughlin M.D."/>
            <person name="Schaller M.E."/>
            <person name="Fewell G.A."/>
            <person name="Delehaunty K.D."/>
            <person name="Miner T.L."/>
            <person name="Nash W.E."/>
            <person name="Cordes M."/>
            <person name="Du H."/>
            <person name="Sun H."/>
            <person name="Edwards J."/>
            <person name="Bradshaw-Cordum H."/>
            <person name="Ali J."/>
            <person name="Andrews S."/>
            <person name="Isak A."/>
            <person name="Vanbrunt A."/>
            <person name="Nguyen C."/>
            <person name="Du F."/>
            <person name="Lamar B."/>
            <person name="Courtney L."/>
            <person name="Kalicki J."/>
            <person name="Ozersky P."/>
            <person name="Bielicki L."/>
            <person name="Scott K."/>
            <person name="Holmes A."/>
            <person name="Harkins R."/>
            <person name="Harris A."/>
            <person name="Strong C.M."/>
            <person name="Hou S."/>
            <person name="Tomlinson C."/>
            <person name="Dauphin-Kohlberg S."/>
            <person name="Kozlowicz-Reilly A."/>
            <person name="Leonard S."/>
            <person name="Rohlfing T."/>
            <person name="Rock S.M."/>
            <person name="Tin-Wollam A.-M."/>
            <person name="Abbott A."/>
            <person name="Minx P."/>
            <person name="Maupin R."/>
            <person name="Strowmatt C."/>
            <person name="Latreille P."/>
            <person name="Miller N."/>
            <person name="Johnson D."/>
            <person name="Murray J."/>
            <person name="Woessner J.P."/>
            <person name="Wendl M.C."/>
            <person name="Yang S.-P."/>
            <person name="Schultz B.R."/>
            <person name="Wallis J.W."/>
            <person name="Spieth J."/>
            <person name="Bieri T.A."/>
            <person name="Nelson J.O."/>
            <person name="Berkowicz N."/>
            <person name="Wohldmann P.E."/>
            <person name="Cook L.L."/>
            <person name="Hickenbotham M.T."/>
            <person name="Eldred J."/>
            <person name="Williams D."/>
            <person name="Bedell J.A."/>
            <person name="Mardis E.R."/>
            <person name="Clifton S.W."/>
            <person name="Chissoe S.L."/>
            <person name="Marra M.A."/>
            <person name="Raymond C."/>
            <person name="Haugen E."/>
            <person name="Gillett W."/>
            <person name="Zhou Y."/>
            <person name="James R."/>
            <person name="Phelps K."/>
            <person name="Iadanoto S."/>
            <person name="Bubb K."/>
            <person name="Simms E."/>
            <person name="Levy R."/>
            <person name="Clendenning J."/>
            <person name="Kaul R."/>
            <person name="Kent W.J."/>
            <person name="Furey T.S."/>
            <person name="Baertsch R.A."/>
            <person name="Brent M.R."/>
            <person name="Keibler E."/>
            <person name="Flicek P."/>
            <person name="Bork P."/>
            <person name="Suyama M."/>
            <person name="Bailey J.A."/>
            <person name="Portnoy M.E."/>
            <person name="Torrents D."/>
            <person name="Chinwalla A.T."/>
            <person name="Gish W.R."/>
            <person name="Eddy S.R."/>
            <person name="McPherson J.D."/>
            <person name="Olson M.V."/>
            <person name="Eichler E.E."/>
            <person name="Green E.D."/>
            <person name="Waterston R.H."/>
            <person name="Wilson R.K."/>
        </authorList>
    </citation>
    <scope>NUCLEOTIDE SEQUENCE [LARGE SCALE GENOMIC DNA]</scope>
</reference>
<reference key="3">
    <citation type="journal article" date="2003" name="Science">
        <title>Human chromosome 7: DNA sequence and biology.</title>
        <authorList>
            <person name="Scherer S.W."/>
            <person name="Cheung J."/>
            <person name="MacDonald J.R."/>
            <person name="Osborne L.R."/>
            <person name="Nakabayashi K."/>
            <person name="Herbrick J.-A."/>
            <person name="Carson A.R."/>
            <person name="Parker-Katiraee L."/>
            <person name="Skaug J."/>
            <person name="Khaja R."/>
            <person name="Zhang J."/>
            <person name="Hudek A.K."/>
            <person name="Li M."/>
            <person name="Haddad M."/>
            <person name="Duggan G.E."/>
            <person name="Fernandez B.A."/>
            <person name="Kanematsu E."/>
            <person name="Gentles S."/>
            <person name="Christopoulos C.C."/>
            <person name="Choufani S."/>
            <person name="Kwasnicka D."/>
            <person name="Zheng X.H."/>
            <person name="Lai Z."/>
            <person name="Nusskern D.R."/>
            <person name="Zhang Q."/>
            <person name="Gu Z."/>
            <person name="Lu F."/>
            <person name="Zeesman S."/>
            <person name="Nowaczyk M.J."/>
            <person name="Teshima I."/>
            <person name="Chitayat D."/>
            <person name="Shuman C."/>
            <person name="Weksberg R."/>
            <person name="Zackai E.H."/>
            <person name="Grebe T.A."/>
            <person name="Cox S.R."/>
            <person name="Kirkpatrick S.J."/>
            <person name="Rahman N."/>
            <person name="Friedman J.M."/>
            <person name="Heng H.H.Q."/>
            <person name="Pelicci P.G."/>
            <person name="Lo-Coco F."/>
            <person name="Belloni E."/>
            <person name="Shaffer L.G."/>
            <person name="Pober B."/>
            <person name="Morton C.C."/>
            <person name="Gusella J.F."/>
            <person name="Bruns G.A.P."/>
            <person name="Korf B.R."/>
            <person name="Quade B.J."/>
            <person name="Ligon A.H."/>
            <person name="Ferguson H."/>
            <person name="Higgins A.W."/>
            <person name="Leach N.T."/>
            <person name="Herrick S.R."/>
            <person name="Lemyre E."/>
            <person name="Farra C.G."/>
            <person name="Kim H.-G."/>
            <person name="Summers A.M."/>
            <person name="Gripp K.W."/>
            <person name="Roberts W."/>
            <person name="Szatmari P."/>
            <person name="Winsor E.J.T."/>
            <person name="Grzeschik K.-H."/>
            <person name="Teebi A."/>
            <person name="Minassian B.A."/>
            <person name="Kere J."/>
            <person name="Armengol L."/>
            <person name="Pujana M.A."/>
            <person name="Estivill X."/>
            <person name="Wilson M.D."/>
            <person name="Koop B.F."/>
            <person name="Tosi S."/>
            <person name="Moore G.E."/>
            <person name="Boright A.P."/>
            <person name="Zlotorynski E."/>
            <person name="Kerem B."/>
            <person name="Kroisel P.M."/>
            <person name="Petek E."/>
            <person name="Oscier D.G."/>
            <person name="Mould S.J."/>
            <person name="Doehner H."/>
            <person name="Doehner K."/>
            <person name="Rommens J.M."/>
            <person name="Vincent J.B."/>
            <person name="Venter J.C."/>
            <person name="Li P.W."/>
            <person name="Mural R.J."/>
            <person name="Adams M.D."/>
            <person name="Tsui L.-C."/>
        </authorList>
    </citation>
    <scope>NUCLEOTIDE SEQUENCE [LARGE SCALE GENOMIC DNA]</scope>
</reference>
<reference key="4">
    <citation type="submission" date="2005-07" db="EMBL/GenBank/DDBJ databases">
        <authorList>
            <person name="Mural R.J."/>
            <person name="Istrail S."/>
            <person name="Sutton G.G."/>
            <person name="Florea L."/>
            <person name="Halpern A.L."/>
            <person name="Mobarry C.M."/>
            <person name="Lippert R."/>
            <person name="Walenz B."/>
            <person name="Shatkay H."/>
            <person name="Dew I."/>
            <person name="Miller J.R."/>
            <person name="Flanigan M.J."/>
            <person name="Edwards N.J."/>
            <person name="Bolanos R."/>
            <person name="Fasulo D."/>
            <person name="Halldorsson B.V."/>
            <person name="Hannenhalli S."/>
            <person name="Turner R."/>
            <person name="Yooseph S."/>
            <person name="Lu F."/>
            <person name="Nusskern D.R."/>
            <person name="Shue B.C."/>
            <person name="Zheng X.H."/>
            <person name="Zhong F."/>
            <person name="Delcher A.L."/>
            <person name="Huson D.H."/>
            <person name="Kravitz S.A."/>
            <person name="Mouchard L."/>
            <person name="Reinert K."/>
            <person name="Remington K.A."/>
            <person name="Clark A.G."/>
            <person name="Waterman M.S."/>
            <person name="Eichler E.E."/>
            <person name="Adams M.D."/>
            <person name="Hunkapiller M.W."/>
            <person name="Myers E.W."/>
            <person name="Venter J.C."/>
        </authorList>
    </citation>
    <scope>NUCLEOTIDE SEQUENCE [LARGE SCALE GENOMIC DNA]</scope>
</reference>
<reference key="5">
    <citation type="journal article" date="2004" name="Genome Res.">
        <title>The status, quality, and expansion of the NIH full-length cDNA project: the Mammalian Gene Collection (MGC).</title>
        <authorList>
            <consortium name="The MGC Project Team"/>
        </authorList>
    </citation>
    <scope>NUCLEOTIDE SEQUENCE [LARGE SCALE MRNA]</scope>
    <scope>VARIANT THR-108</scope>
    <source>
        <tissue>Colon</tissue>
        <tissue>Placenta</tissue>
    </source>
</reference>
<reference key="6">
    <citation type="submission" date="2012-05" db="PDB data bank">
        <title>Structure of human homocysteine-inducible, endoplasmic reticulum stress-inducible, ubiquitin-like domain member 2 (HERPUD2 or HERP).</title>
        <authorList>
            <consortium name="Northeast structural genomics consortium (NESG)"/>
        </authorList>
    </citation>
    <scope>STRUCTURE BY NMR OF 9-85</scope>
</reference>
<feature type="chain" id="PRO_0000280627" description="Homocysteine-responsive endoplasmic reticulum-resident ubiquitin-like domain member 2 protein">
    <location>
        <begin position="1"/>
        <end position="406"/>
    </location>
</feature>
<feature type="transmembrane region" description="Helical" evidence="2">
    <location>
        <begin position="302"/>
        <end position="322"/>
    </location>
</feature>
<feature type="domain" description="Ubiquitin-like" evidence="3">
    <location>
        <begin position="10"/>
        <end position="89"/>
    </location>
</feature>
<feature type="region of interest" description="Disordered" evidence="4">
    <location>
        <begin position="86"/>
        <end position="154"/>
    </location>
</feature>
<feature type="compositionally biased region" description="Low complexity" evidence="4">
    <location>
        <begin position="87"/>
        <end position="98"/>
    </location>
</feature>
<feature type="compositionally biased region" description="Low complexity" evidence="4">
    <location>
        <begin position="106"/>
        <end position="126"/>
    </location>
</feature>
<feature type="compositionally biased region" description="Polar residues" evidence="4">
    <location>
        <begin position="127"/>
        <end position="154"/>
    </location>
</feature>
<feature type="sequence variant" id="VAR_031182" description="In dbSNP:rs3779234." evidence="5">
    <original>A</original>
    <variation>T</variation>
    <location>
        <position position="108"/>
    </location>
</feature>
<feature type="sequence variant" id="VAR_031183" description="In dbSNP:rs2305335.">
    <original>H</original>
    <variation>L</variation>
    <location>
        <position position="200"/>
    </location>
</feature>
<feature type="strand" evidence="7">
    <location>
        <begin position="10"/>
        <end position="15"/>
    </location>
</feature>
<feature type="strand" evidence="7">
    <location>
        <begin position="19"/>
        <end position="21"/>
    </location>
</feature>
<feature type="strand" evidence="7">
    <location>
        <begin position="24"/>
        <end position="28"/>
    </location>
</feature>
<feature type="helix" evidence="7">
    <location>
        <begin position="34"/>
        <end position="44"/>
    </location>
</feature>
<feature type="turn" evidence="7">
    <location>
        <begin position="51"/>
        <end position="53"/>
    </location>
</feature>
<feature type="strand" evidence="7">
    <location>
        <begin position="56"/>
        <end position="58"/>
    </location>
</feature>
<feature type="strand" evidence="7">
    <location>
        <begin position="61"/>
        <end position="63"/>
    </location>
</feature>
<feature type="helix" evidence="7">
    <location>
        <begin position="70"/>
        <end position="73"/>
    </location>
</feature>
<feature type="turn" evidence="7">
    <location>
        <begin position="74"/>
        <end position="76"/>
    </location>
</feature>
<feature type="strand" evidence="7">
    <location>
        <begin position="78"/>
        <end position="84"/>
    </location>
</feature>
<protein>
    <recommendedName>
        <fullName>Homocysteine-responsive endoplasmic reticulum-resident ubiquitin-like domain member 2 protein</fullName>
    </recommendedName>
</protein>
<keyword id="KW-0002">3D-structure</keyword>
<keyword id="KW-0472">Membrane</keyword>
<keyword id="KW-1267">Proteomics identification</keyword>
<keyword id="KW-1185">Reference proteome</keyword>
<keyword id="KW-0812">Transmembrane</keyword>
<keyword id="KW-1133">Transmembrane helix</keyword>
<keyword id="KW-0834">Unfolded protein response</keyword>
<name>HERP2_HUMAN</name>
<comment type="function">
    <text evidence="1">Could be involved in the unfolded protein response (UPR) pathway.</text>
</comment>
<comment type="interaction">
    <interactant intactId="EBI-2868124">
        <id>Q9BSE4</id>
    </interactant>
    <interactant intactId="EBI-13064220">
        <id>Q5BKT4</id>
        <label>ALG10</label>
    </interactant>
    <organismsDiffer>false</organismsDiffer>
    <experiments>3</experiments>
</comment>
<comment type="interaction">
    <interactant intactId="EBI-2868124">
        <id>Q9BSE4</id>
    </interactant>
    <interactant intactId="EBI-10269179">
        <id>Q8NBI2</id>
        <label>CYB561A3</label>
    </interactant>
    <organismsDiffer>false</organismsDiffer>
    <experiments>3</experiments>
</comment>
<comment type="interaction">
    <interactant intactId="EBI-2868124">
        <id>Q9BSE4</id>
    </interactant>
    <interactant intactId="EBI-1753674">
        <id>P52803</id>
        <label>EFNA5</label>
    </interactant>
    <organismsDiffer>false</organismsDiffer>
    <experiments>3</experiments>
</comment>
<comment type="interaction">
    <interactant intactId="EBI-2868124">
        <id>Q9BSE4</id>
    </interactant>
    <interactant intactId="EBI-725665">
        <id>Q9Y5U9</id>
        <label>IER3IP1</label>
    </interactant>
    <organismsDiffer>false</organismsDiffer>
    <experiments>3</experiments>
</comment>
<comment type="interaction">
    <interactant intactId="EBI-2868124">
        <id>Q9BSE4</id>
    </interactant>
    <interactant intactId="EBI-12070086">
        <id>Q5J8X5</id>
        <label>MS4A13</label>
    </interactant>
    <organismsDiffer>false</organismsDiffer>
    <experiments>3</experiments>
</comment>
<comment type="interaction">
    <interactant intactId="EBI-2868124">
        <id>Q9BSE4</id>
    </interactant>
    <interactant intactId="EBI-2515597">
        <id>Q96HR8</id>
        <label>NAF1</label>
    </interactant>
    <organismsDiffer>false</organismsDiffer>
    <experiments>3</experiments>
</comment>
<comment type="interaction">
    <interactant intactId="EBI-2868124">
        <id>Q9BSE4</id>
    </interactant>
    <interactant intactId="EBI-12363689">
        <id>Q96G79</id>
        <label>SLC35A4</label>
    </interactant>
    <organismsDiffer>false</organismsDiffer>
    <experiments>3</experiments>
</comment>
<comment type="interaction">
    <interactant intactId="EBI-2868124">
        <id>Q9BSE4</id>
    </interactant>
    <interactant intactId="EBI-2823239">
        <id>Q9NUM3</id>
        <label>SLC39A9</label>
    </interactant>
    <organismsDiffer>false</organismsDiffer>
    <experiments>3</experiments>
</comment>
<comment type="interaction">
    <interactant intactId="EBI-2868124">
        <id>Q9BSE4</id>
    </interactant>
    <interactant intactId="EBI-4289564">
        <id>P30825</id>
        <label>SLC7A1</label>
    </interactant>
    <organismsDiffer>false</organismsDiffer>
    <experiments>3</experiments>
</comment>
<comment type="interaction">
    <interactant intactId="EBI-2868124">
        <id>Q9BSE4</id>
    </interactant>
    <interactant intactId="EBI-723396">
        <id>Q969W0</id>
        <label>SPTSSA</label>
    </interactant>
    <organismsDiffer>false</organismsDiffer>
    <experiments>3</experiments>
</comment>
<comment type="interaction">
    <interactant intactId="EBI-2868124">
        <id>Q9BSE4</id>
    </interactant>
    <interactant intactId="EBI-12963900">
        <id>Q9NYW0</id>
        <label>TAS2R10</label>
    </interactant>
    <organismsDiffer>false</organismsDiffer>
    <experiments>3</experiments>
</comment>
<comment type="interaction">
    <interactant intactId="EBI-2868124">
        <id>Q9BSE4</id>
    </interactant>
    <interactant intactId="EBI-1045825">
        <id>P55061</id>
        <label>TMBIM6</label>
    </interactant>
    <organismsDiffer>false</organismsDiffer>
    <experiments>5</experiments>
</comment>
<comment type="interaction">
    <interactant intactId="EBI-2868124">
        <id>Q9BSE4</id>
    </interactant>
    <interactant intactId="EBI-12876358">
        <id>Q7Z5S9</id>
        <label>TMEM144</label>
    </interactant>
    <organismsDiffer>false</organismsDiffer>
    <experiments>3</experiments>
</comment>
<comment type="interaction">
    <interactant intactId="EBI-2868124">
        <id>Q9BSE4</id>
    </interactant>
    <interactant intactId="EBI-2852148">
        <id>Q9H2L4</id>
        <label>TMEM60</label>
    </interactant>
    <organismsDiffer>false</organismsDiffer>
    <experiments>3</experiments>
</comment>
<comment type="interaction">
    <interactant intactId="EBI-2868124">
        <id>Q9BSE4</id>
    </interactant>
    <interactant intactId="EBI-712629">
        <id>P63146</id>
        <label>UBE2B</label>
    </interactant>
    <organismsDiffer>false</organismsDiffer>
    <experiments>3</experiments>
</comment>
<comment type="subcellular location">
    <subcellularLocation>
        <location evidence="6">Membrane</location>
        <topology evidence="6">Single-pass membrane protein</topology>
    </subcellularLocation>
</comment>
<sequence>MDQSGMEIPVTLIIKAPNQKYSDQTISCFLNWTVGKLKTHLSNVYPSKPLTKDQRLVYSGRLLPDHLQLKDILRKQDEYHMVHLVCTSRTPPSSPKSSTNRESHEALASSSNSSSDHSGSTTPSSGQETLSLAVGSSSEGLRQRTLPQAQTDQAQSHQFPYVMQGNVDNQFPGQAAPPGFPVYPAFSPLQMLWWQQMYAHQYYMQYQAAVSAQATSNVNPTQPTTSQPLNLAHVPGEEPPPAPNLVAQENRPMNENVQMNAQGGPVLNEEDFNRDWLDWMYTFSRAAILLSIVYFYSSFSRFIMVMGAMLLVYLHQAGWFPFRQEGGHQQAPNNNAEVNNDGQNANNLELEEMERLMDDGLEDESGEDGGEDASAIQRPGLMASAWSFITTFFTSLIPEGPPQVAN</sequence>